<evidence type="ECO:0000255" key="1">
    <source>
        <dbReference type="HAMAP-Rule" id="MF_01326"/>
    </source>
</evidence>
<evidence type="ECO:0000305" key="2"/>
<name>RL24_BARHE</name>
<proteinExistence type="inferred from homology"/>
<accession>Q6G2X6</accession>
<protein>
    <recommendedName>
        <fullName evidence="1">Large ribosomal subunit protein uL24</fullName>
    </recommendedName>
    <alternativeName>
        <fullName evidence="2">50S ribosomal protein L24</fullName>
    </alternativeName>
</protein>
<sequence>MQKIRKGDKVIVLSGKDKGCSGEVIKVNPKENRAFVRGVNMIKRHQRQTQNQEAGIISKEAPIHLSNLAIADPKDGKPTRVGFRVNADGNKVRFAKRSGELING</sequence>
<feature type="chain" id="PRO_0000241569" description="Large ribosomal subunit protein uL24">
    <location>
        <begin position="1"/>
        <end position="104"/>
    </location>
</feature>
<comment type="function">
    <text evidence="1">One of two assembly initiator proteins, it binds directly to the 5'-end of the 23S rRNA, where it nucleates assembly of the 50S subunit.</text>
</comment>
<comment type="function">
    <text evidence="1">One of the proteins that surrounds the polypeptide exit tunnel on the outside of the subunit.</text>
</comment>
<comment type="subunit">
    <text evidence="1">Part of the 50S ribosomal subunit.</text>
</comment>
<comment type="similarity">
    <text evidence="1">Belongs to the universal ribosomal protein uL24 family.</text>
</comment>
<reference key="1">
    <citation type="journal article" date="2004" name="Proc. Natl. Acad. Sci. U.S.A.">
        <title>The louse-borne human pathogen Bartonella quintana is a genomic derivative of the zoonotic agent Bartonella henselae.</title>
        <authorList>
            <person name="Alsmark U.C.M."/>
            <person name="Frank A.C."/>
            <person name="Karlberg E.O."/>
            <person name="Legault B.-A."/>
            <person name="Ardell D.H."/>
            <person name="Canbaeck B."/>
            <person name="Eriksson A.-S."/>
            <person name="Naeslund A.K."/>
            <person name="Handley S.A."/>
            <person name="Huvet M."/>
            <person name="La Scola B."/>
            <person name="Holmberg M."/>
            <person name="Andersson S.G.E."/>
        </authorList>
    </citation>
    <scope>NUCLEOTIDE SEQUENCE [LARGE SCALE GENOMIC DNA]</scope>
    <source>
        <strain>ATCC 49882 / DSM 28221 / CCUG 30454 / Houston 1</strain>
    </source>
</reference>
<dbReference type="EMBL" id="BX897699">
    <property type="protein sequence ID" value="CAF27831.1"/>
    <property type="molecule type" value="Genomic_DNA"/>
</dbReference>
<dbReference type="RefSeq" id="WP_011180903.1">
    <property type="nucleotide sequence ID" value="NZ_LRIJ02000001.1"/>
</dbReference>
<dbReference type="SMR" id="Q6G2X6"/>
<dbReference type="PaxDb" id="283166-BH10400"/>
<dbReference type="EnsemblBacteria" id="CAF27831">
    <property type="protein sequence ID" value="CAF27831"/>
    <property type="gene ID" value="BH10400"/>
</dbReference>
<dbReference type="GeneID" id="92985274"/>
<dbReference type="KEGG" id="bhe:BH10400"/>
<dbReference type="eggNOG" id="COG0198">
    <property type="taxonomic scope" value="Bacteria"/>
</dbReference>
<dbReference type="OrthoDB" id="9807419at2"/>
<dbReference type="Proteomes" id="UP000000421">
    <property type="component" value="Chromosome"/>
</dbReference>
<dbReference type="GO" id="GO:1990904">
    <property type="term" value="C:ribonucleoprotein complex"/>
    <property type="evidence" value="ECO:0007669"/>
    <property type="project" value="UniProtKB-KW"/>
</dbReference>
<dbReference type="GO" id="GO:0005840">
    <property type="term" value="C:ribosome"/>
    <property type="evidence" value="ECO:0007669"/>
    <property type="project" value="UniProtKB-KW"/>
</dbReference>
<dbReference type="GO" id="GO:0019843">
    <property type="term" value="F:rRNA binding"/>
    <property type="evidence" value="ECO:0007669"/>
    <property type="project" value="UniProtKB-UniRule"/>
</dbReference>
<dbReference type="GO" id="GO:0003735">
    <property type="term" value="F:structural constituent of ribosome"/>
    <property type="evidence" value="ECO:0007669"/>
    <property type="project" value="InterPro"/>
</dbReference>
<dbReference type="GO" id="GO:0006412">
    <property type="term" value="P:translation"/>
    <property type="evidence" value="ECO:0007669"/>
    <property type="project" value="UniProtKB-UniRule"/>
</dbReference>
<dbReference type="CDD" id="cd06089">
    <property type="entry name" value="KOW_RPL26"/>
    <property type="match status" value="1"/>
</dbReference>
<dbReference type="FunFam" id="2.30.30.30:FF:000004">
    <property type="entry name" value="50S ribosomal protein L24"/>
    <property type="match status" value="1"/>
</dbReference>
<dbReference type="Gene3D" id="2.30.30.30">
    <property type="match status" value="1"/>
</dbReference>
<dbReference type="HAMAP" id="MF_01326_B">
    <property type="entry name" value="Ribosomal_uL24_B"/>
    <property type="match status" value="1"/>
</dbReference>
<dbReference type="InterPro" id="IPR005824">
    <property type="entry name" value="KOW"/>
</dbReference>
<dbReference type="InterPro" id="IPR014722">
    <property type="entry name" value="Rib_uL2_dom2"/>
</dbReference>
<dbReference type="InterPro" id="IPR003256">
    <property type="entry name" value="Ribosomal_uL24"/>
</dbReference>
<dbReference type="InterPro" id="IPR005825">
    <property type="entry name" value="Ribosomal_uL24_CS"/>
</dbReference>
<dbReference type="InterPro" id="IPR041988">
    <property type="entry name" value="Ribosomal_uL24_KOW"/>
</dbReference>
<dbReference type="InterPro" id="IPR008991">
    <property type="entry name" value="Translation_prot_SH3-like_sf"/>
</dbReference>
<dbReference type="NCBIfam" id="TIGR01079">
    <property type="entry name" value="rplX_bact"/>
    <property type="match status" value="1"/>
</dbReference>
<dbReference type="PANTHER" id="PTHR12903">
    <property type="entry name" value="MITOCHONDRIAL RIBOSOMAL PROTEIN L24"/>
    <property type="match status" value="1"/>
</dbReference>
<dbReference type="Pfam" id="PF00467">
    <property type="entry name" value="KOW"/>
    <property type="match status" value="1"/>
</dbReference>
<dbReference type="Pfam" id="PF17136">
    <property type="entry name" value="ribosomal_L24"/>
    <property type="match status" value="1"/>
</dbReference>
<dbReference type="SMART" id="SM00739">
    <property type="entry name" value="KOW"/>
    <property type="match status" value="1"/>
</dbReference>
<dbReference type="SUPFAM" id="SSF50104">
    <property type="entry name" value="Translation proteins SH3-like domain"/>
    <property type="match status" value="1"/>
</dbReference>
<dbReference type="PROSITE" id="PS01108">
    <property type="entry name" value="RIBOSOMAL_L24"/>
    <property type="match status" value="1"/>
</dbReference>
<keyword id="KW-0687">Ribonucleoprotein</keyword>
<keyword id="KW-0689">Ribosomal protein</keyword>
<keyword id="KW-0694">RNA-binding</keyword>
<keyword id="KW-0699">rRNA-binding</keyword>
<gene>
    <name evidence="1" type="primary">rplX</name>
    <name type="ordered locus">BH10400</name>
</gene>
<organism>
    <name type="scientific">Bartonella henselae (strain ATCC 49882 / DSM 28221 / CCUG 30454 / Houston 1)</name>
    <name type="common">Rochalimaea henselae</name>
    <dbReference type="NCBI Taxonomy" id="283166"/>
    <lineage>
        <taxon>Bacteria</taxon>
        <taxon>Pseudomonadati</taxon>
        <taxon>Pseudomonadota</taxon>
        <taxon>Alphaproteobacteria</taxon>
        <taxon>Hyphomicrobiales</taxon>
        <taxon>Bartonellaceae</taxon>
        <taxon>Bartonella</taxon>
    </lineage>
</organism>